<evidence type="ECO:0000255" key="1">
    <source>
        <dbReference type="HAMAP-Rule" id="MF_00592"/>
    </source>
</evidence>
<keyword id="KW-0963">Cytoplasm</keyword>
<keyword id="KW-0456">Lyase</keyword>
<keyword id="KW-0704">Schiff base</keyword>
<name>DEOC_SHESA</name>
<reference key="1">
    <citation type="submission" date="2006-09" db="EMBL/GenBank/DDBJ databases">
        <title>Complete sequence of chromosome 1 of Shewanella sp. ANA-3.</title>
        <authorList>
            <person name="Copeland A."/>
            <person name="Lucas S."/>
            <person name="Lapidus A."/>
            <person name="Barry K."/>
            <person name="Detter J.C."/>
            <person name="Glavina del Rio T."/>
            <person name="Hammon N."/>
            <person name="Israni S."/>
            <person name="Dalin E."/>
            <person name="Tice H."/>
            <person name="Pitluck S."/>
            <person name="Chertkov O."/>
            <person name="Brettin T."/>
            <person name="Bruce D."/>
            <person name="Han C."/>
            <person name="Tapia R."/>
            <person name="Gilna P."/>
            <person name="Schmutz J."/>
            <person name="Larimer F."/>
            <person name="Land M."/>
            <person name="Hauser L."/>
            <person name="Kyrpides N."/>
            <person name="Kim E."/>
            <person name="Newman D."/>
            <person name="Salticov C."/>
            <person name="Konstantinidis K."/>
            <person name="Klappenback J."/>
            <person name="Tiedje J."/>
            <person name="Richardson P."/>
        </authorList>
    </citation>
    <scope>NUCLEOTIDE SEQUENCE [LARGE SCALE GENOMIC DNA]</scope>
    <source>
        <strain>ANA-3</strain>
    </source>
</reference>
<dbReference type="EC" id="4.1.2.4" evidence="1"/>
<dbReference type="EMBL" id="CP000469">
    <property type="protein sequence ID" value="ABK47276.1"/>
    <property type="molecule type" value="Genomic_DNA"/>
</dbReference>
<dbReference type="RefSeq" id="WP_011716152.1">
    <property type="nucleotide sequence ID" value="NC_008577.1"/>
</dbReference>
<dbReference type="SMR" id="A0KU07"/>
<dbReference type="STRING" id="94122.Shewana3_1041"/>
<dbReference type="KEGG" id="shn:Shewana3_1041"/>
<dbReference type="eggNOG" id="COG0274">
    <property type="taxonomic scope" value="Bacteria"/>
</dbReference>
<dbReference type="HOGENOM" id="CLU_053595_3_1_6"/>
<dbReference type="OrthoDB" id="6579831at2"/>
<dbReference type="UniPathway" id="UPA00002">
    <property type="reaction ID" value="UER00468"/>
</dbReference>
<dbReference type="Proteomes" id="UP000002589">
    <property type="component" value="Chromosome"/>
</dbReference>
<dbReference type="GO" id="GO:0005737">
    <property type="term" value="C:cytoplasm"/>
    <property type="evidence" value="ECO:0007669"/>
    <property type="project" value="UniProtKB-SubCell"/>
</dbReference>
<dbReference type="GO" id="GO:0004139">
    <property type="term" value="F:deoxyribose-phosphate aldolase activity"/>
    <property type="evidence" value="ECO:0007669"/>
    <property type="project" value="UniProtKB-UniRule"/>
</dbReference>
<dbReference type="GO" id="GO:0006018">
    <property type="term" value="P:2-deoxyribose 1-phosphate catabolic process"/>
    <property type="evidence" value="ECO:0007669"/>
    <property type="project" value="UniProtKB-UniRule"/>
</dbReference>
<dbReference type="GO" id="GO:0016052">
    <property type="term" value="P:carbohydrate catabolic process"/>
    <property type="evidence" value="ECO:0007669"/>
    <property type="project" value="TreeGrafter"/>
</dbReference>
<dbReference type="GO" id="GO:0009264">
    <property type="term" value="P:deoxyribonucleotide catabolic process"/>
    <property type="evidence" value="ECO:0007669"/>
    <property type="project" value="InterPro"/>
</dbReference>
<dbReference type="CDD" id="cd00959">
    <property type="entry name" value="DeoC"/>
    <property type="match status" value="1"/>
</dbReference>
<dbReference type="Gene3D" id="3.20.20.70">
    <property type="entry name" value="Aldolase class I"/>
    <property type="match status" value="1"/>
</dbReference>
<dbReference type="HAMAP" id="MF_00592">
    <property type="entry name" value="DeoC_type2"/>
    <property type="match status" value="1"/>
</dbReference>
<dbReference type="InterPro" id="IPR013785">
    <property type="entry name" value="Aldolase_TIM"/>
</dbReference>
<dbReference type="InterPro" id="IPR011343">
    <property type="entry name" value="DeoC"/>
</dbReference>
<dbReference type="InterPro" id="IPR002915">
    <property type="entry name" value="DeoC/FbaB/LacD_aldolase"/>
</dbReference>
<dbReference type="InterPro" id="IPR023649">
    <property type="entry name" value="DeoC_typeII"/>
</dbReference>
<dbReference type="NCBIfam" id="TIGR00126">
    <property type="entry name" value="deoC"/>
    <property type="match status" value="1"/>
</dbReference>
<dbReference type="PANTHER" id="PTHR10889">
    <property type="entry name" value="DEOXYRIBOSE-PHOSPHATE ALDOLASE"/>
    <property type="match status" value="1"/>
</dbReference>
<dbReference type="PANTHER" id="PTHR10889:SF3">
    <property type="entry name" value="DEOXYRIBOSE-PHOSPHATE ALDOLASE"/>
    <property type="match status" value="1"/>
</dbReference>
<dbReference type="Pfam" id="PF01791">
    <property type="entry name" value="DeoC"/>
    <property type="match status" value="1"/>
</dbReference>
<dbReference type="PIRSF" id="PIRSF001357">
    <property type="entry name" value="DeoC"/>
    <property type="match status" value="1"/>
</dbReference>
<dbReference type="SMART" id="SM01133">
    <property type="entry name" value="DeoC"/>
    <property type="match status" value="1"/>
</dbReference>
<dbReference type="SUPFAM" id="SSF51569">
    <property type="entry name" value="Aldolase"/>
    <property type="match status" value="1"/>
</dbReference>
<protein>
    <recommendedName>
        <fullName evidence="1">Deoxyribose-phosphate aldolase</fullName>
        <shortName evidence="1">DERA</shortName>
        <ecNumber evidence="1">4.1.2.4</ecNumber>
    </recommendedName>
    <alternativeName>
        <fullName evidence="1">2-deoxy-D-ribose 5-phosphate aldolase</fullName>
    </alternativeName>
    <alternativeName>
        <fullName evidence="1">Phosphodeoxyriboaldolase</fullName>
        <shortName evidence="1">Deoxyriboaldolase</shortName>
    </alternativeName>
</protein>
<sequence>MTDLKKAAQRAIELMDLTTLNDDDTDQKVIDLCHKAVTPAGNTAAICIYPRFIPIARKTLDELGAEDIQIATVTNFPHGNDDIAIAVLETRAAVAYGADEVDVVFPYRALMEGNESVGYELVKACKEACGDVLLKVIIESGVLADPALIRRASELSIDAGADFIKTSTGKVPVNATLEAAEIMLTVISEKNTKVGFKPAGGVRDAAQAAEFLGVAERILGADWVSPRTFRFGASSLLNSLLHTLELADAPKPTQGY</sequence>
<proteinExistence type="inferred from homology"/>
<comment type="function">
    <text evidence="1">Catalyzes a reversible aldol reaction between acetaldehyde and D-glyceraldehyde 3-phosphate to generate 2-deoxy-D-ribose 5-phosphate.</text>
</comment>
<comment type="catalytic activity">
    <reaction evidence="1">
        <text>2-deoxy-D-ribose 5-phosphate = D-glyceraldehyde 3-phosphate + acetaldehyde</text>
        <dbReference type="Rhea" id="RHEA:12821"/>
        <dbReference type="ChEBI" id="CHEBI:15343"/>
        <dbReference type="ChEBI" id="CHEBI:59776"/>
        <dbReference type="ChEBI" id="CHEBI:62877"/>
        <dbReference type="EC" id="4.1.2.4"/>
    </reaction>
</comment>
<comment type="pathway">
    <text evidence="1">Carbohydrate degradation; 2-deoxy-D-ribose 1-phosphate degradation; D-glyceraldehyde 3-phosphate and acetaldehyde from 2-deoxy-alpha-D-ribose 1-phosphate: step 2/2.</text>
</comment>
<comment type="subcellular location">
    <subcellularLocation>
        <location evidence="1">Cytoplasm</location>
    </subcellularLocation>
</comment>
<comment type="similarity">
    <text evidence="1">Belongs to the DeoC/FbaB aldolase family. DeoC type 2 subfamily.</text>
</comment>
<feature type="chain" id="PRO_1000072608" description="Deoxyribose-phosphate aldolase">
    <location>
        <begin position="1"/>
        <end position="256"/>
    </location>
</feature>
<feature type="active site" description="Proton donor/acceptor" evidence="1">
    <location>
        <position position="102"/>
    </location>
</feature>
<feature type="active site" description="Schiff-base intermediate with acetaldehyde" evidence="1">
    <location>
        <position position="165"/>
    </location>
</feature>
<feature type="active site" description="Proton donor/acceptor" evidence="1">
    <location>
        <position position="197"/>
    </location>
</feature>
<organism>
    <name type="scientific">Shewanella sp. (strain ANA-3)</name>
    <dbReference type="NCBI Taxonomy" id="94122"/>
    <lineage>
        <taxon>Bacteria</taxon>
        <taxon>Pseudomonadati</taxon>
        <taxon>Pseudomonadota</taxon>
        <taxon>Gammaproteobacteria</taxon>
        <taxon>Alteromonadales</taxon>
        <taxon>Shewanellaceae</taxon>
        <taxon>Shewanella</taxon>
    </lineage>
</organism>
<accession>A0KU07</accession>
<gene>
    <name evidence="1" type="primary">deoC</name>
    <name type="ordered locus">Shewana3_1041</name>
</gene>